<name>MYOD1_HUMAN</name>
<keyword id="KW-0007">Acetylation</keyword>
<keyword id="KW-0010">Activator</keyword>
<keyword id="KW-0217">Developmental protein</keyword>
<keyword id="KW-0221">Differentiation</keyword>
<keyword id="KW-0225">Disease variant</keyword>
<keyword id="KW-0238">DNA-binding</keyword>
<keyword id="KW-0488">Methylation</keyword>
<keyword id="KW-0517">Myogenesis</keyword>
<keyword id="KW-0539">Nucleus</keyword>
<keyword id="KW-0597">Phosphoprotein</keyword>
<keyword id="KW-1267">Proteomics identification</keyword>
<keyword id="KW-1185">Reference proteome</keyword>
<keyword id="KW-0804">Transcription</keyword>
<keyword id="KW-0805">Transcription regulation</keyword>
<keyword id="KW-0832">Ubl conjugation</keyword>
<gene>
    <name type="primary">MYOD1</name>
    <name type="synonym">BHLHC1</name>
    <name type="synonym">MYF3</name>
    <name type="synonym">MYOD</name>
</gene>
<comment type="function">
    <text evidence="1">Acts as a transcriptional activator that promotes transcription of muscle-specific target genes and plays a role in muscle differentiation. Together with MYF5 and MYOG, co-occupies muscle-specific gene promoter core region during myogenesis. Induces fibroblasts to differentiate into myoblasts. Interacts with and is inhibited by the twist protein. This interaction probably involves the basic domains of both proteins (By similarity).</text>
</comment>
<comment type="subunit">
    <text evidence="2 5 6 9">Efficient DNA binding requires dimerization with another bHLH protein. Seems to form active heterodimers with ITF-2. Interacts with SUV39H1. Interacts with DDX5. Interacts with CHD2. Interacts with TSC22D3 (By similarity). Interacts with SETD3 (By similarity). Interacts with P-TEFB complex; promotes the transcriptional activity of MYOD1 through its CDK9-mediated phosphorylation (By similarity) (PubMed:12037670). Interacts with CSRP3. Interacts with NUPR1 (By similarity).</text>
</comment>
<comment type="interaction">
    <interactant intactId="EBI-488878">
        <id>P15172</id>
    </interactant>
    <interactant intactId="EBI-541426">
        <id>Q9BXS5</id>
        <label>AP1M1</label>
    </interactant>
    <organismsDiffer>false</organismsDiffer>
    <experiments>3</experiments>
</comment>
<comment type="interaction">
    <interactant intactId="EBI-488878">
        <id>P15172</id>
    </interactant>
    <interactant intactId="EBI-2813180">
        <id>Q86VI1</id>
        <label>EXOC3L1</label>
    </interactant>
    <organismsDiffer>false</organismsDiffer>
    <experiments>3</experiments>
</comment>
<comment type="interaction">
    <interactant intactId="EBI-488878">
        <id>P15172</id>
    </interactant>
    <interactant intactId="EBI-11976617">
        <id>Q6QHK4</id>
        <label>FIGLA</label>
    </interactant>
    <organismsDiffer>false</organismsDiffer>
    <experiments>3</experiments>
</comment>
<comment type="interaction">
    <interactant intactId="EBI-488878">
        <id>P15172</id>
    </interactant>
    <interactant intactId="EBI-11955401">
        <id>Q86VF2-5</id>
        <label>IGFN1</label>
    </interactant>
    <organismsDiffer>false</organismsDiffer>
    <experiments>3</experiments>
</comment>
<comment type="interaction">
    <interactant intactId="EBI-488878">
        <id>P15172</id>
    </interactant>
    <interactant intactId="EBI-2798728">
        <id>P61968</id>
        <label>LMO4</label>
    </interactant>
    <organismsDiffer>false</organismsDiffer>
    <experiments>3</experiments>
</comment>
<comment type="interaction">
    <interactant intactId="EBI-488878">
        <id>P15172</id>
    </interactant>
    <interactant intactId="EBI-723267">
        <id>O43680</id>
        <label>TCF21</label>
    </interactant>
    <organismsDiffer>false</organismsDiffer>
    <experiments>3</experiments>
</comment>
<comment type="interaction">
    <interactant intactId="EBI-488878">
        <id>P15172</id>
    </interactant>
    <interactant intactId="EBI-769645">
        <id>P15923-1</id>
        <label>TCF3</label>
    </interactant>
    <organismsDiffer>false</organismsDiffer>
    <experiments>2</experiments>
</comment>
<comment type="subcellular location">
    <subcellularLocation>
        <location>Nucleus</location>
    </subcellularLocation>
</comment>
<comment type="PTM">
    <text evidence="5">Phosphorylated by CDK9. This phosphorylation promotes its function in muscle differentiation.</text>
</comment>
<comment type="PTM">
    <text evidence="1">Acetylated by a complex containing EP300 and PCAF. The acetylation is essential to activate target genes. Conversely, its deacetylation by SIRT1 inhibits its function (By similarity).</text>
</comment>
<comment type="PTM">
    <text evidence="13">Ubiquitinated on the N-terminus; which is required for proteasomal degradation.</text>
</comment>
<comment type="PTM">
    <text evidence="8">Methylation at Lys-104 by EHMT2/G9a inhibits myogenic activity.</text>
</comment>
<comment type="disease" evidence="10 11 12">
    <disease id="DI-05895">
        <name>Congenital myopathy 17</name>
        <acronym>CMYO17</acronym>
        <description>An autosomal recessive muscular disorder characterized by hypotonia and respiratory insufficiency apparent soon after birth, high diaphragmatic dome on imaging, poor overall growth, pectus excavatum, dysmorphic facies, and renal anomalies in some affected individuals. Additional variable features include delayed motor development, mildly decreased endurance, distal arthrogryposis, and lung hypoplasia resulting in early death.</description>
        <dbReference type="MIM" id="618975"/>
    </disease>
    <text>The disease is caused by variants affecting the gene represented in this entry.</text>
</comment>
<comment type="online information" name="Wikipedia">
    <link uri="https://en.wikipedia.org/wiki/MyoD"/>
    <text>MyoD entry</text>
</comment>
<proteinExistence type="evidence at protein level"/>
<protein>
    <recommendedName>
        <fullName>Myoblast determination protein 1</fullName>
    </recommendedName>
    <alternativeName>
        <fullName>Class C basic helix-loop-helix protein 1</fullName>
        <shortName>bHLHc1</shortName>
    </alternativeName>
    <alternativeName>
        <fullName>Myogenic factor 3</fullName>
        <shortName>Myf-3</shortName>
    </alternativeName>
</protein>
<accession>P15172</accession>
<accession>O75321</accession>
<reference key="1">
    <citation type="journal article" date="1991" name="Nucleic Acids Res.">
        <title>Human MyoD: cDNA and deduced amino acid sequence.</title>
        <authorList>
            <person name="Pearson-White S.H."/>
        </authorList>
    </citation>
    <scope>NUCLEOTIDE SEQUENCE [MRNA]</scope>
</reference>
<reference key="2">
    <citation type="journal article" date="1998" name="Am. J. Pathol.">
        <title>Methylation alterations of the MyoD1 upstream region are predictive of subclassification of human rhabdomyosarcomas.</title>
        <authorList>
            <person name="Chen B."/>
            <person name="Dias P."/>
            <person name="Jenkins J.J. III"/>
            <person name="Savell V.H."/>
            <person name="Parham D.M."/>
        </authorList>
    </citation>
    <scope>NUCLEOTIDE SEQUENCE [GENOMIC DNA]</scope>
</reference>
<reference key="3">
    <citation type="submission" date="2003-05" db="EMBL/GenBank/DDBJ databases">
        <title>Cloning of human full-length CDSs in BD Creator(TM) system donor vector.</title>
        <authorList>
            <person name="Kalnine N."/>
            <person name="Chen X."/>
            <person name="Rolfs A."/>
            <person name="Halleck A."/>
            <person name="Hines L."/>
            <person name="Eisenstein S."/>
            <person name="Koundinya M."/>
            <person name="Raphael J."/>
            <person name="Moreira D."/>
            <person name="Kelley T."/>
            <person name="LaBaer J."/>
            <person name="Lin Y."/>
            <person name="Phelan M."/>
            <person name="Farmer A."/>
        </authorList>
    </citation>
    <scope>NUCLEOTIDE SEQUENCE [LARGE SCALE MRNA]</scope>
</reference>
<reference key="4">
    <citation type="submission" date="2005-09" db="EMBL/GenBank/DDBJ databases">
        <authorList>
            <person name="Mural R.J."/>
            <person name="Istrail S."/>
            <person name="Sutton G.G."/>
            <person name="Florea L."/>
            <person name="Halpern A.L."/>
            <person name="Mobarry C.M."/>
            <person name="Lippert R."/>
            <person name="Walenz B."/>
            <person name="Shatkay H."/>
            <person name="Dew I."/>
            <person name="Miller J.R."/>
            <person name="Flanigan M.J."/>
            <person name="Edwards N.J."/>
            <person name="Bolanos R."/>
            <person name="Fasulo D."/>
            <person name="Halldorsson B.V."/>
            <person name="Hannenhalli S."/>
            <person name="Turner R."/>
            <person name="Yooseph S."/>
            <person name="Lu F."/>
            <person name="Nusskern D.R."/>
            <person name="Shue B.C."/>
            <person name="Zheng X.H."/>
            <person name="Zhong F."/>
            <person name="Delcher A.L."/>
            <person name="Huson D.H."/>
            <person name="Kravitz S.A."/>
            <person name="Mouchard L."/>
            <person name="Reinert K."/>
            <person name="Remington K.A."/>
            <person name="Clark A.G."/>
            <person name="Waterman M.S."/>
            <person name="Eichler E.E."/>
            <person name="Adams M.D."/>
            <person name="Hunkapiller M.W."/>
            <person name="Myers E.W."/>
            <person name="Venter J.C."/>
        </authorList>
    </citation>
    <scope>NUCLEOTIDE SEQUENCE [LARGE SCALE GENOMIC DNA]</scope>
</reference>
<reference key="5">
    <citation type="journal article" date="2004" name="Genome Res.">
        <title>The status, quality, and expansion of the NIH full-length cDNA project: the Mammalian Gene Collection (MGC).</title>
        <authorList>
            <consortium name="The MGC Project Team"/>
        </authorList>
    </citation>
    <scope>NUCLEOTIDE SEQUENCE [LARGE SCALE MRNA]</scope>
    <source>
        <tissue>Muscle</tissue>
    </source>
</reference>
<reference key="6">
    <citation type="journal article" date="1989" name="EMBO J.">
        <title>Differential expression of myogenic determination genes in muscle cells: possible autoactivation by the Myf gene products.</title>
        <authorList>
            <person name="Braun T."/>
            <person name="Bober E."/>
            <person name="Buschhausen-Denker G."/>
            <person name="Kohtz S."/>
            <person name="Grzeschik K.-H."/>
            <person name="Arnold H.H."/>
        </authorList>
    </citation>
    <scope>NUCLEOTIDE SEQUENCE [MRNA] OF 53-320</scope>
    <source>
        <tissue>Skeletal muscle</tissue>
    </source>
</reference>
<reference key="7">
    <citation type="journal article" date="1998" name="EMBO J.">
        <title>A novel site for ubiquitination: the N-terminal residue, and not internal lysines of MyoD, is essential for conjugation and degradation of the protein.</title>
        <authorList>
            <person name="Breitschopf K."/>
            <person name="Bengal E."/>
            <person name="Ziv T."/>
            <person name="Admon A."/>
            <person name="Ciechanover A."/>
        </authorList>
    </citation>
    <scope>UBIQUITINATION AT MET-1</scope>
</reference>
<reference key="8">
    <citation type="journal article" date="2001" name="Curr. Opin. Genet. Dev.">
        <title>Control of muscle development by dueling HATs and HDACs.</title>
        <authorList>
            <person name="McKinsey T.A."/>
            <person name="Zhang C.L."/>
            <person name="Olson E.N."/>
        </authorList>
    </citation>
    <scope>REVIEW ON ACETYLATION/DEACETYLATION</scope>
</reference>
<reference key="9">
    <citation type="journal article" date="2002" name="Oncogene">
        <title>Activation of MyoD-dependent transcription by cdk9/cyclin T2.</title>
        <authorList>
            <person name="Simone C."/>
            <person name="Stiegler P."/>
            <person name="Bagella L."/>
            <person name="Pucci B."/>
            <person name="Bellan C."/>
            <person name="De Falco G."/>
            <person name="De Luca A."/>
            <person name="Guanti G."/>
            <person name="Puri P.L."/>
            <person name="Giordano A."/>
        </authorList>
    </citation>
    <scope>INTERACTION WITH CDK9</scope>
</reference>
<reference key="10">
    <citation type="journal article" date="2006" name="EMBO J.">
        <title>Histone methyltransferase Suv39h1 represses MyoD-stimulated myogenic differentiation.</title>
        <authorList>
            <person name="Mal A.K."/>
        </authorList>
    </citation>
    <scope>INTERACTION WITH SUV39H1</scope>
</reference>
<reference key="11">
    <citation type="journal article" date="2012" name="Proc. Natl. Acad. Sci. U.S.A.">
        <title>Lysine methyltransferase G9a methylates the transcription factor MyoD and regulates skeletal muscle differentiation.</title>
        <authorList>
            <person name="Ling B.M."/>
            <person name="Bharathy N."/>
            <person name="Chung T.K."/>
            <person name="Kok W.K."/>
            <person name="Li S."/>
            <person name="Tan Y.H."/>
            <person name="Rao V.K."/>
            <person name="Gopinadhan S."/>
            <person name="Sartorelli V."/>
            <person name="Walsh M.J."/>
            <person name="Taneja R."/>
        </authorList>
    </citation>
    <scope>METHYLATION AT LYS-104</scope>
</reference>
<reference key="12">
    <citation type="journal article" date="2014" name="FEBS J.">
        <title>Muscle lim protein isoform negatively regulates striated muscle actin dynamics and differentiation.</title>
        <authorList>
            <person name="Vafiadaki E."/>
            <person name="Arvanitis D.A."/>
            <person name="Papalouka V."/>
            <person name="Terzis G."/>
            <person name="Roumeliotis T.I."/>
            <person name="Spengos K."/>
            <person name="Garbis S.D."/>
            <person name="Manta P."/>
            <person name="Kranias E.G."/>
            <person name="Sanoudou D."/>
        </authorList>
    </citation>
    <scope>INTERACTION WITH CSRP3</scope>
</reference>
<reference key="13">
    <citation type="journal article" date="2016" name="J. Med. Genet.">
        <title>Deficiency of the myogenic factor MyoD causes a perinatally lethal fetal akinesia.</title>
        <authorList>
            <person name="Watson C.M."/>
            <person name="Crinnion L.A."/>
            <person name="Murphy H."/>
            <person name="Newbould M."/>
            <person name="Harrison S.M."/>
            <person name="Lascelles C."/>
            <person name="Antanaviciute A."/>
            <person name="Carr I.M."/>
            <person name="Sheridan E."/>
            <person name="Bonthron D.T."/>
            <person name="Smith A."/>
        </authorList>
    </citation>
    <scope>INVOLVEMENT IN CMYO17</scope>
    <scope>VARIANT CMYO17 63-SER--LEU-320 DEL</scope>
</reference>
<reference key="14">
    <citation type="journal article" date="2019" name="Clin. Genet.">
        <title>A novel bi-allelic loss-of-function variant in MYOD1: Further evidence for gene-disease association and phenotypic variability in MYOD1-related myopathy.</title>
        <authorList>
            <person name="Shukla A."/>
            <person name="Narayanan D.L."/>
            <person name="Asher U."/>
            <person name="Girisha K.M."/>
        </authorList>
    </citation>
    <scope>INVOLVEMENT IN CMYO17</scope>
</reference>
<reference key="15">
    <citation type="journal article" date="2018" name="Eur. J. Neurol.">
        <title>MYOD1 involvement in myopathy.</title>
        <authorList>
            <person name="Lopes F."/>
            <person name="Miguet M."/>
            <person name="Mucha B.E."/>
            <person name="Gauthier J."/>
            <person name="Saillour V."/>
            <person name="Nguyen C.E."/>
            <person name="Vanasse M."/>
            <person name="Ellezam B."/>
            <person name="Michaud J.L."/>
            <person name="Soucy J.F."/>
            <person name="Campeau P.M."/>
        </authorList>
    </citation>
    <scope>VARIANT CMYO17 233-GLU--LEU-320 DEL</scope>
</reference>
<reference key="16">
    <citation type="journal article" date="2006" name="Science">
        <title>The consensus coding sequences of human breast and colorectal cancers.</title>
        <authorList>
            <person name="Sjoeblom T."/>
            <person name="Jones S."/>
            <person name="Wood L.D."/>
            <person name="Parsons D.W."/>
            <person name="Lin J."/>
            <person name="Barber T.D."/>
            <person name="Mandelker D."/>
            <person name="Leary R.J."/>
            <person name="Ptak J."/>
            <person name="Silliman N."/>
            <person name="Szabo S."/>
            <person name="Buckhaults P."/>
            <person name="Farrell C."/>
            <person name="Meeh P."/>
            <person name="Markowitz S.D."/>
            <person name="Willis J."/>
            <person name="Dawson D."/>
            <person name="Willson J.K.V."/>
            <person name="Gazdar A.F."/>
            <person name="Hartigan J."/>
            <person name="Wu L."/>
            <person name="Liu C."/>
            <person name="Parmigiani G."/>
            <person name="Park B.H."/>
            <person name="Bachman K.E."/>
            <person name="Papadopoulos N."/>
            <person name="Vogelstein B."/>
            <person name="Kinzler K.W."/>
            <person name="Velculescu V.E."/>
        </authorList>
    </citation>
    <scope>VARIANTS [LARGE SCALE ANALYSIS] LYS-262 AND VAL-309</scope>
</reference>
<evidence type="ECO:0000250" key="1"/>
<evidence type="ECO:0000250" key="2">
    <source>
        <dbReference type="UniProtKB" id="P10085"/>
    </source>
</evidence>
<evidence type="ECO:0000255" key="3">
    <source>
        <dbReference type="PROSITE-ProRule" id="PRU00981"/>
    </source>
</evidence>
<evidence type="ECO:0000256" key="4">
    <source>
        <dbReference type="SAM" id="MobiDB-lite"/>
    </source>
</evidence>
<evidence type="ECO:0000269" key="5">
    <source>
    </source>
</evidence>
<evidence type="ECO:0000269" key="6">
    <source>
    </source>
</evidence>
<evidence type="ECO:0000269" key="7">
    <source>
    </source>
</evidence>
<evidence type="ECO:0000269" key="8">
    <source>
    </source>
</evidence>
<evidence type="ECO:0000269" key="9">
    <source>
    </source>
</evidence>
<evidence type="ECO:0000269" key="10">
    <source>
    </source>
</evidence>
<evidence type="ECO:0000269" key="11">
    <source>
    </source>
</evidence>
<evidence type="ECO:0000269" key="12">
    <source>
    </source>
</evidence>
<evidence type="ECO:0000269" key="13">
    <source>
    </source>
</evidence>
<evidence type="ECO:0000305" key="14"/>
<organism>
    <name type="scientific">Homo sapiens</name>
    <name type="common">Human</name>
    <dbReference type="NCBI Taxonomy" id="9606"/>
    <lineage>
        <taxon>Eukaryota</taxon>
        <taxon>Metazoa</taxon>
        <taxon>Chordata</taxon>
        <taxon>Craniata</taxon>
        <taxon>Vertebrata</taxon>
        <taxon>Euteleostomi</taxon>
        <taxon>Mammalia</taxon>
        <taxon>Eutheria</taxon>
        <taxon>Euarchontoglires</taxon>
        <taxon>Primates</taxon>
        <taxon>Haplorrhini</taxon>
        <taxon>Catarrhini</taxon>
        <taxon>Hominidae</taxon>
        <taxon>Homo</taxon>
    </lineage>
</organism>
<feature type="chain" id="PRO_0000127360" description="Myoblast determination protein 1">
    <location>
        <begin position="1"/>
        <end position="320"/>
    </location>
</feature>
<feature type="domain" description="bHLH" evidence="3">
    <location>
        <begin position="109"/>
        <end position="160"/>
    </location>
</feature>
<feature type="region of interest" description="Disordered" evidence="4">
    <location>
        <begin position="174"/>
        <end position="219"/>
    </location>
</feature>
<feature type="region of interest" description="Disordered" evidence="4">
    <location>
        <begin position="262"/>
        <end position="320"/>
    </location>
</feature>
<feature type="compositionally biased region" description="Polar residues" evidence="4">
    <location>
        <begin position="197"/>
        <end position="207"/>
    </location>
</feature>
<feature type="compositionally biased region" description="Polar residues" evidence="4">
    <location>
        <begin position="291"/>
        <end position="301"/>
    </location>
</feature>
<feature type="modified residue" description="N6-methyllysine; by EHMT2" evidence="8">
    <location>
        <position position="104"/>
    </location>
</feature>
<feature type="cross-link" description="Peptide (Met-Gly) (interchain with G-Cter in ubiquitin)" evidence="13">
    <location>
        <position position="1"/>
    </location>
</feature>
<feature type="sequence variant" id="VAR_084715" description="In CMYO17." evidence="10">
    <location>
        <begin position="63"/>
        <end position="320"/>
    </location>
</feature>
<feature type="sequence variant" id="VAR_084716" description="In CMYO17; uncertain significance." evidence="11">
    <location>
        <begin position="233"/>
        <end position="320"/>
    </location>
</feature>
<feature type="sequence variant" id="VAR_036392" description="In a breast cancer sample; somatic mutation; dbSNP:rs930939009." evidence="7">
    <original>E</original>
    <variation>K</variation>
    <location>
        <position position="262"/>
    </location>
</feature>
<feature type="sequence variant" id="VAR_036393" description="In a breast cancer sample; somatic mutation; dbSNP:rs1471293207." evidence="7">
    <original>A</original>
    <variation>V</variation>
    <location>
        <position position="309"/>
    </location>
</feature>
<feature type="sequence conflict" description="In Ref. 6; CAA35640." evidence="14" ref="6">
    <original>K</original>
    <variation>E</variation>
    <location>
        <position position="124"/>
    </location>
</feature>
<feature type="sequence conflict" description="In Ref. 1; CAA40000 and 6; CAA35640." evidence="14" ref="1 6">
    <location>
        <position position="177"/>
    </location>
</feature>
<feature type="sequence conflict" description="In Ref. 1; CAA40000 and 6; CAA35640." evidence="14" ref="1 6">
    <original>C</original>
    <variation>Y</variation>
    <location>
        <position position="251"/>
    </location>
</feature>
<sequence>MELLSPPLRDVDLTAPDGSLCSFATTDDFYDDPCFDSPDLRFFEDLDPRLMHVGALLKPEEHSHFPAAVHPAPGAREDEHVRAPSGHHQAGRCLLWACKACKRKTTNADRRKAATMRERRRLSKVNEAFETLKRCTSSNPNQRLPKVEILRNAIRYIEGLQALLRDQDAAPPGAAAAFYAPGPLPPGRGGEHYSGDSDASSPRSNCSDGMMDYSGPPSGARRRNCYEGAYYNEAPSEPRPGKSAAVSSLDCLSSIVERISTESPAAPALLLADVPSESPPRRQEAAAPSEGESSGDPTQSPDAAPQCPAGANPNPIYQVL</sequence>
<dbReference type="EMBL" id="X56677">
    <property type="protein sequence ID" value="CAA40000.1"/>
    <property type="molecule type" value="mRNA"/>
</dbReference>
<dbReference type="EMBL" id="AF027148">
    <property type="protein sequence ID" value="AAC29001.1"/>
    <property type="molecule type" value="Genomic_DNA"/>
</dbReference>
<dbReference type="EMBL" id="BT007157">
    <property type="protein sequence ID" value="AAP35821.1"/>
    <property type="molecule type" value="mRNA"/>
</dbReference>
<dbReference type="EMBL" id="CH471064">
    <property type="protein sequence ID" value="EAW68427.1"/>
    <property type="molecule type" value="Genomic_DNA"/>
</dbReference>
<dbReference type="EMBL" id="BC064493">
    <property type="protein sequence ID" value="AAH64493.1"/>
    <property type="molecule type" value="mRNA"/>
</dbReference>
<dbReference type="EMBL" id="X17650">
    <property type="protein sequence ID" value="CAA35640.1"/>
    <property type="molecule type" value="mRNA"/>
</dbReference>
<dbReference type="CCDS" id="CCDS7826.1"/>
<dbReference type="PIR" id="S26827">
    <property type="entry name" value="S26827"/>
</dbReference>
<dbReference type="RefSeq" id="NP_002469.2">
    <property type="nucleotide sequence ID" value="NM_002478.4"/>
</dbReference>
<dbReference type="SMR" id="P15172"/>
<dbReference type="BioGRID" id="110737">
    <property type="interactions" value="166"/>
</dbReference>
<dbReference type="ComplexPortal" id="CPX-8128">
    <property type="entry name" value="VCP-YOD1 AAA ATPase complex"/>
</dbReference>
<dbReference type="CORUM" id="P15172"/>
<dbReference type="DIP" id="DIP-704N"/>
<dbReference type="FunCoup" id="P15172">
    <property type="interactions" value="379"/>
</dbReference>
<dbReference type="IntAct" id="P15172">
    <property type="interactions" value="112"/>
</dbReference>
<dbReference type="MINT" id="P15172"/>
<dbReference type="STRING" id="9606.ENSP00000250003"/>
<dbReference type="GlyGen" id="P15172">
    <property type="glycosylation" value="1 site, 1 O-linked glycan (1 site)"/>
</dbReference>
<dbReference type="iPTMnet" id="P15172"/>
<dbReference type="PhosphoSitePlus" id="P15172"/>
<dbReference type="BioMuta" id="MYOD1"/>
<dbReference type="DMDM" id="209572729"/>
<dbReference type="MassIVE" id="P15172"/>
<dbReference type="PaxDb" id="9606-ENSP00000250003"/>
<dbReference type="PeptideAtlas" id="P15172"/>
<dbReference type="ProteomicsDB" id="53118"/>
<dbReference type="Antibodypedia" id="12172">
    <property type="antibodies" value="1146 antibodies from 47 providers"/>
</dbReference>
<dbReference type="DNASU" id="4654"/>
<dbReference type="Ensembl" id="ENST00000250003.4">
    <property type="protein sequence ID" value="ENSP00000250003.3"/>
    <property type="gene ID" value="ENSG00000129152.4"/>
</dbReference>
<dbReference type="GeneID" id="4654"/>
<dbReference type="KEGG" id="hsa:4654"/>
<dbReference type="MANE-Select" id="ENST00000250003.4">
    <property type="protein sequence ID" value="ENSP00000250003.3"/>
    <property type="RefSeq nucleotide sequence ID" value="NM_002478.5"/>
    <property type="RefSeq protein sequence ID" value="NP_002469.2"/>
</dbReference>
<dbReference type="UCSC" id="uc001mni.4">
    <property type="organism name" value="human"/>
</dbReference>
<dbReference type="AGR" id="HGNC:7611"/>
<dbReference type="CTD" id="4654"/>
<dbReference type="DisGeNET" id="4654"/>
<dbReference type="GeneCards" id="MYOD1"/>
<dbReference type="HGNC" id="HGNC:7611">
    <property type="gene designation" value="MYOD1"/>
</dbReference>
<dbReference type="HPA" id="ENSG00000129152">
    <property type="expression patterns" value="Tissue enriched (skeletal)"/>
</dbReference>
<dbReference type="MalaCards" id="MYOD1"/>
<dbReference type="MIM" id="159970">
    <property type="type" value="gene"/>
</dbReference>
<dbReference type="MIM" id="618975">
    <property type="type" value="phenotype"/>
</dbReference>
<dbReference type="neXtProt" id="NX_P15172"/>
<dbReference type="OpenTargets" id="ENSG00000129152"/>
<dbReference type="Orphanet" id="994">
    <property type="disease" value="Fetal akinesia deformation sequence"/>
</dbReference>
<dbReference type="PharmGKB" id="PA31416"/>
<dbReference type="VEuPathDB" id="HostDB:ENSG00000129152"/>
<dbReference type="eggNOG" id="KOG3960">
    <property type="taxonomic scope" value="Eukaryota"/>
</dbReference>
<dbReference type="GeneTree" id="ENSGT00950000182959"/>
<dbReference type="HOGENOM" id="CLU_066887_0_0_1"/>
<dbReference type="InParanoid" id="P15172"/>
<dbReference type="OMA" id="GPMEMTE"/>
<dbReference type="OrthoDB" id="10049614at2759"/>
<dbReference type="PAN-GO" id="P15172">
    <property type="GO annotations" value="6 GO annotations based on evolutionary models"/>
</dbReference>
<dbReference type="PhylomeDB" id="P15172"/>
<dbReference type="TreeFam" id="TF316344"/>
<dbReference type="PathwayCommons" id="P15172"/>
<dbReference type="Reactome" id="R-HSA-525793">
    <property type="pathway name" value="Myogenesis"/>
</dbReference>
<dbReference type="Reactome" id="R-HSA-9839394">
    <property type="pathway name" value="TGFBR3 expression"/>
</dbReference>
<dbReference type="SignaLink" id="P15172"/>
<dbReference type="SIGNOR" id="P15172"/>
<dbReference type="BioGRID-ORCS" id="4654">
    <property type="hits" value="14 hits in 1176 CRISPR screens"/>
</dbReference>
<dbReference type="ChiTaRS" id="MYOD1">
    <property type="organism name" value="human"/>
</dbReference>
<dbReference type="GeneWiki" id="MyoD"/>
<dbReference type="GenomeRNAi" id="4654"/>
<dbReference type="Pharos" id="P15172">
    <property type="development level" value="Tbio"/>
</dbReference>
<dbReference type="PRO" id="PR:P15172"/>
<dbReference type="Proteomes" id="UP000005640">
    <property type="component" value="Chromosome 11"/>
</dbReference>
<dbReference type="RNAct" id="P15172">
    <property type="molecule type" value="protein"/>
</dbReference>
<dbReference type="Bgee" id="ENSG00000129152">
    <property type="expression patterns" value="Expressed in triceps brachii and 52 other cell types or tissues"/>
</dbReference>
<dbReference type="GO" id="GO:0000785">
    <property type="term" value="C:chromatin"/>
    <property type="evidence" value="ECO:0000250"/>
    <property type="project" value="BHF-UCL"/>
</dbReference>
<dbReference type="GO" id="GO:0000791">
    <property type="term" value="C:euchromatin"/>
    <property type="evidence" value="ECO:0000250"/>
    <property type="project" value="ARUK-UCL"/>
</dbReference>
<dbReference type="GO" id="GO:0030016">
    <property type="term" value="C:myofibril"/>
    <property type="evidence" value="ECO:0007669"/>
    <property type="project" value="Ensembl"/>
</dbReference>
<dbReference type="GO" id="GO:0005654">
    <property type="term" value="C:nucleoplasm"/>
    <property type="evidence" value="ECO:0000314"/>
    <property type="project" value="HPA"/>
</dbReference>
<dbReference type="GO" id="GO:0005634">
    <property type="term" value="C:nucleus"/>
    <property type="evidence" value="ECO:0000304"/>
    <property type="project" value="ProtInc"/>
</dbReference>
<dbReference type="GO" id="GO:0005667">
    <property type="term" value="C:transcription regulator complex"/>
    <property type="evidence" value="ECO:0000250"/>
    <property type="project" value="BHF-UCL"/>
</dbReference>
<dbReference type="GO" id="GO:0043425">
    <property type="term" value="F:bHLH transcription factor binding"/>
    <property type="evidence" value="ECO:0007669"/>
    <property type="project" value="Ensembl"/>
</dbReference>
<dbReference type="GO" id="GO:0003682">
    <property type="term" value="F:chromatin binding"/>
    <property type="evidence" value="ECO:0000250"/>
    <property type="project" value="UniProtKB"/>
</dbReference>
<dbReference type="GO" id="GO:0031490">
    <property type="term" value="F:chromatin DNA binding"/>
    <property type="evidence" value="ECO:0007669"/>
    <property type="project" value="Ensembl"/>
</dbReference>
<dbReference type="GO" id="GO:0001216">
    <property type="term" value="F:DNA-binding transcription activator activity"/>
    <property type="evidence" value="ECO:0000250"/>
    <property type="project" value="UniProtKB"/>
</dbReference>
<dbReference type="GO" id="GO:0001228">
    <property type="term" value="F:DNA-binding transcription activator activity, RNA polymerase II-specific"/>
    <property type="evidence" value="ECO:0000314"/>
    <property type="project" value="NTNU_SB"/>
</dbReference>
<dbReference type="GO" id="GO:0000981">
    <property type="term" value="F:DNA-binding transcription factor activity, RNA polymerase II-specific"/>
    <property type="evidence" value="ECO:0000247"/>
    <property type="project" value="NTNU_SB"/>
</dbReference>
<dbReference type="GO" id="GO:0070888">
    <property type="term" value="F:E-box binding"/>
    <property type="evidence" value="ECO:0000250"/>
    <property type="project" value="UniProtKB"/>
</dbReference>
<dbReference type="GO" id="GO:0016922">
    <property type="term" value="F:nuclear receptor binding"/>
    <property type="evidence" value="ECO:0000353"/>
    <property type="project" value="UniProtKB"/>
</dbReference>
<dbReference type="GO" id="GO:1990841">
    <property type="term" value="F:promoter-specific chromatin binding"/>
    <property type="evidence" value="ECO:0000250"/>
    <property type="project" value="UniProtKB"/>
</dbReference>
<dbReference type="GO" id="GO:0042803">
    <property type="term" value="F:protein homodimerization activity"/>
    <property type="evidence" value="ECO:0000250"/>
    <property type="project" value="ARUK-UCL"/>
</dbReference>
<dbReference type="GO" id="GO:0000978">
    <property type="term" value="F:RNA polymerase II cis-regulatory region sequence-specific DNA binding"/>
    <property type="evidence" value="ECO:0000318"/>
    <property type="project" value="GO_Central"/>
</dbReference>
<dbReference type="GO" id="GO:0000977">
    <property type="term" value="F:RNA polymerase II transcription regulatory region sequence-specific DNA binding"/>
    <property type="evidence" value="ECO:0000314"/>
    <property type="project" value="NTNU_SB"/>
</dbReference>
<dbReference type="GO" id="GO:0061629">
    <property type="term" value="F:RNA polymerase II-specific DNA-binding transcription factor binding"/>
    <property type="evidence" value="ECO:0000250"/>
    <property type="project" value="ARUK-UCL"/>
</dbReference>
<dbReference type="GO" id="GO:1990837">
    <property type="term" value="F:sequence-specific double-stranded DNA binding"/>
    <property type="evidence" value="ECO:0000314"/>
    <property type="project" value="ARUK-UCL"/>
</dbReference>
<dbReference type="GO" id="GO:0031625">
    <property type="term" value="F:ubiquitin protein ligase binding"/>
    <property type="evidence" value="ECO:0007669"/>
    <property type="project" value="Ensembl"/>
</dbReference>
<dbReference type="GO" id="GO:0071392">
    <property type="term" value="P:cellular response to estradiol stimulus"/>
    <property type="evidence" value="ECO:0000250"/>
    <property type="project" value="UniProtKB"/>
</dbReference>
<dbReference type="GO" id="GO:0071385">
    <property type="term" value="P:cellular response to glucocorticoid stimulus"/>
    <property type="evidence" value="ECO:0007669"/>
    <property type="project" value="Ensembl"/>
</dbReference>
<dbReference type="GO" id="GO:0071453">
    <property type="term" value="P:cellular response to oxygen levels"/>
    <property type="evidence" value="ECO:0007669"/>
    <property type="project" value="Ensembl"/>
</dbReference>
<dbReference type="GO" id="GO:0009267">
    <property type="term" value="P:cellular response to starvation"/>
    <property type="evidence" value="ECO:0007669"/>
    <property type="project" value="Ensembl"/>
</dbReference>
<dbReference type="GO" id="GO:0071356">
    <property type="term" value="P:cellular response to tumor necrosis factor"/>
    <property type="evidence" value="ECO:0007669"/>
    <property type="project" value="Ensembl"/>
</dbReference>
<dbReference type="GO" id="GO:0042693">
    <property type="term" value="P:muscle cell fate commitment"/>
    <property type="evidence" value="ECO:0000250"/>
    <property type="project" value="BHF-UCL"/>
</dbReference>
<dbReference type="GO" id="GO:0007517">
    <property type="term" value="P:muscle organ development"/>
    <property type="evidence" value="ECO:0000304"/>
    <property type="project" value="ProtInc"/>
</dbReference>
<dbReference type="GO" id="GO:0007518">
    <property type="term" value="P:myoblast fate determination"/>
    <property type="evidence" value="ECO:0007669"/>
    <property type="project" value="Ensembl"/>
</dbReference>
<dbReference type="GO" id="GO:0007520">
    <property type="term" value="P:myoblast fusion"/>
    <property type="evidence" value="ECO:0007669"/>
    <property type="project" value="Ensembl"/>
</dbReference>
<dbReference type="GO" id="GO:0014904">
    <property type="term" value="P:myotube cell development"/>
    <property type="evidence" value="ECO:0000314"/>
    <property type="project" value="BHF-UCL"/>
</dbReference>
<dbReference type="GO" id="GO:0014908">
    <property type="term" value="P:myotube differentiation involved in skeletal muscle regeneration"/>
    <property type="evidence" value="ECO:0007669"/>
    <property type="project" value="Ensembl"/>
</dbReference>
<dbReference type="GO" id="GO:2000818">
    <property type="term" value="P:negative regulation of myoblast proliferation"/>
    <property type="evidence" value="ECO:0007669"/>
    <property type="project" value="Ensembl"/>
</dbReference>
<dbReference type="GO" id="GO:0051149">
    <property type="term" value="P:positive regulation of muscle cell differentiation"/>
    <property type="evidence" value="ECO:0000314"/>
    <property type="project" value="BHF-UCL"/>
</dbReference>
<dbReference type="GO" id="GO:0045663">
    <property type="term" value="P:positive regulation of myoblast differentiation"/>
    <property type="evidence" value="ECO:0000318"/>
    <property type="project" value="GO_Central"/>
</dbReference>
<dbReference type="GO" id="GO:1901741">
    <property type="term" value="P:positive regulation of myoblast fusion"/>
    <property type="evidence" value="ECO:0000314"/>
    <property type="project" value="BHF-UCL"/>
</dbReference>
<dbReference type="GO" id="GO:0048743">
    <property type="term" value="P:positive regulation of skeletal muscle fiber development"/>
    <property type="evidence" value="ECO:0000318"/>
    <property type="project" value="GO_Central"/>
</dbReference>
<dbReference type="GO" id="GO:0043415">
    <property type="term" value="P:positive regulation of skeletal muscle tissue regeneration"/>
    <property type="evidence" value="ECO:0007669"/>
    <property type="project" value="Ensembl"/>
</dbReference>
<dbReference type="GO" id="GO:1905382">
    <property type="term" value="P:positive regulation of snRNA transcription by RNA polymerase II"/>
    <property type="evidence" value="ECO:0000250"/>
    <property type="project" value="UniProtKB"/>
</dbReference>
<dbReference type="GO" id="GO:0045944">
    <property type="term" value="P:positive regulation of transcription by RNA polymerase II"/>
    <property type="evidence" value="ECO:0000314"/>
    <property type="project" value="NTNU_SB"/>
</dbReference>
<dbReference type="GO" id="GO:0006468">
    <property type="term" value="P:protein phosphorylation"/>
    <property type="evidence" value="ECO:0000304"/>
    <property type="project" value="ProtInc"/>
</dbReference>
<dbReference type="GO" id="GO:0000381">
    <property type="term" value="P:regulation of alternative mRNA splicing, via spliceosome"/>
    <property type="evidence" value="ECO:0007669"/>
    <property type="project" value="Ensembl"/>
</dbReference>
<dbReference type="GO" id="GO:0043484">
    <property type="term" value="P:regulation of RNA splicing"/>
    <property type="evidence" value="ECO:0000314"/>
    <property type="project" value="BHF-UCL"/>
</dbReference>
<dbReference type="GO" id="GO:0006357">
    <property type="term" value="P:regulation of transcription by RNA polymerase II"/>
    <property type="evidence" value="ECO:0000318"/>
    <property type="project" value="GO_Central"/>
</dbReference>
<dbReference type="GO" id="GO:0035914">
    <property type="term" value="P:skeletal muscle cell differentiation"/>
    <property type="evidence" value="ECO:0000318"/>
    <property type="project" value="GO_Central"/>
</dbReference>
<dbReference type="GO" id="GO:0043503">
    <property type="term" value="P:skeletal muscle fiber adaptation"/>
    <property type="evidence" value="ECO:0007669"/>
    <property type="project" value="Ensembl"/>
</dbReference>
<dbReference type="GO" id="GO:0048741">
    <property type="term" value="P:skeletal muscle fiber development"/>
    <property type="evidence" value="ECO:0007669"/>
    <property type="project" value="Ensembl"/>
</dbReference>
<dbReference type="GO" id="GO:0007519">
    <property type="term" value="P:skeletal muscle tissue development"/>
    <property type="evidence" value="ECO:0000304"/>
    <property type="project" value="ProtInc"/>
</dbReference>
<dbReference type="GO" id="GO:0006366">
    <property type="term" value="P:transcription by RNA polymerase II"/>
    <property type="evidence" value="ECO:0007669"/>
    <property type="project" value="Ensembl"/>
</dbReference>
<dbReference type="CDD" id="cd18936">
    <property type="entry name" value="bHLH_TS_MYOD1_Myf3"/>
    <property type="match status" value="1"/>
</dbReference>
<dbReference type="FunFam" id="4.10.280.10:FF:000005">
    <property type="entry name" value="Myogenic factor"/>
    <property type="match status" value="1"/>
</dbReference>
<dbReference type="Gene3D" id="4.10.280.10">
    <property type="entry name" value="Helix-loop-helix DNA-binding domain"/>
    <property type="match status" value="1"/>
</dbReference>
<dbReference type="InterPro" id="IPR011598">
    <property type="entry name" value="bHLH_dom"/>
</dbReference>
<dbReference type="InterPro" id="IPR036638">
    <property type="entry name" value="HLH_DNA-bd_sf"/>
</dbReference>
<dbReference type="InterPro" id="IPR022032">
    <property type="entry name" value="Myf5"/>
</dbReference>
<dbReference type="InterPro" id="IPR002546">
    <property type="entry name" value="MyoD_N"/>
</dbReference>
<dbReference type="InterPro" id="IPR039704">
    <property type="entry name" value="Myogenic_factor"/>
</dbReference>
<dbReference type="PANTHER" id="PTHR11534:SF2">
    <property type="entry name" value="MYOBLAST DETERMINATION PROTEIN 1"/>
    <property type="match status" value="1"/>
</dbReference>
<dbReference type="PANTHER" id="PTHR11534">
    <property type="entry name" value="MYOGENIC FACTOR"/>
    <property type="match status" value="1"/>
</dbReference>
<dbReference type="Pfam" id="PF01586">
    <property type="entry name" value="Basic"/>
    <property type="match status" value="1"/>
</dbReference>
<dbReference type="Pfam" id="PF00010">
    <property type="entry name" value="HLH"/>
    <property type="match status" value="1"/>
</dbReference>
<dbReference type="Pfam" id="PF12232">
    <property type="entry name" value="Myf5"/>
    <property type="match status" value="1"/>
</dbReference>
<dbReference type="SMART" id="SM00520">
    <property type="entry name" value="BASIC"/>
    <property type="match status" value="1"/>
</dbReference>
<dbReference type="SMART" id="SM00353">
    <property type="entry name" value="HLH"/>
    <property type="match status" value="1"/>
</dbReference>
<dbReference type="SUPFAM" id="SSF47459">
    <property type="entry name" value="HLH, helix-loop-helix DNA-binding domain"/>
    <property type="match status" value="1"/>
</dbReference>
<dbReference type="PROSITE" id="PS50888">
    <property type="entry name" value="BHLH"/>
    <property type="match status" value="1"/>
</dbReference>